<gene>
    <name evidence="1" type="primary">gpmA</name>
    <name type="ordered locus">PGN_0243</name>
</gene>
<protein>
    <recommendedName>
        <fullName evidence="1">2,3-bisphosphoglycerate-dependent phosphoglycerate mutase</fullName>
        <shortName evidence="1">BPG-dependent PGAM</shortName>
        <shortName evidence="1">PGAM</shortName>
        <shortName evidence="1">Phosphoglyceromutase</shortName>
        <shortName evidence="1">dPGM</shortName>
        <ecNumber evidence="1">5.4.2.11</ecNumber>
    </recommendedName>
</protein>
<proteinExistence type="inferred from homology"/>
<organism>
    <name type="scientific">Porphyromonas gingivalis (strain ATCC 33277 / DSM 20709 / CIP 103683 / JCM 12257 / NCTC 11834 / 2561)</name>
    <dbReference type="NCBI Taxonomy" id="431947"/>
    <lineage>
        <taxon>Bacteria</taxon>
        <taxon>Pseudomonadati</taxon>
        <taxon>Bacteroidota</taxon>
        <taxon>Bacteroidia</taxon>
        <taxon>Bacteroidales</taxon>
        <taxon>Porphyromonadaceae</taxon>
        <taxon>Porphyromonas</taxon>
    </lineage>
</organism>
<accession>B2RHB7</accession>
<reference key="1">
    <citation type="journal article" date="2008" name="DNA Res.">
        <title>Determination of the genome sequence of Porphyromonas gingivalis strain ATCC 33277 and genomic comparison with strain W83 revealed extensive genome rearrangements in P. gingivalis.</title>
        <authorList>
            <person name="Naito M."/>
            <person name="Hirakawa H."/>
            <person name="Yamashita A."/>
            <person name="Ohara N."/>
            <person name="Shoji M."/>
            <person name="Yukitake H."/>
            <person name="Nakayama K."/>
            <person name="Toh H."/>
            <person name="Yoshimura F."/>
            <person name="Kuhara S."/>
            <person name="Hattori M."/>
            <person name="Hayashi T."/>
            <person name="Nakayama K."/>
        </authorList>
    </citation>
    <scope>NUCLEOTIDE SEQUENCE [LARGE SCALE GENOMIC DNA]</scope>
    <source>
        <strain>ATCC 33277 / DSM 20709 / CIP 103683 / JCM 12257 / NCTC 11834 / 2561</strain>
    </source>
</reference>
<name>GPMA_PORG3</name>
<keyword id="KW-0312">Gluconeogenesis</keyword>
<keyword id="KW-0324">Glycolysis</keyword>
<keyword id="KW-0413">Isomerase</keyword>
<evidence type="ECO:0000255" key="1">
    <source>
        <dbReference type="HAMAP-Rule" id="MF_01039"/>
    </source>
</evidence>
<feature type="chain" id="PRO_1000135964" description="2,3-bisphosphoglycerate-dependent phosphoglycerate mutase">
    <location>
        <begin position="1"/>
        <end position="248"/>
    </location>
</feature>
<feature type="active site" description="Tele-phosphohistidine intermediate" evidence="1">
    <location>
        <position position="9"/>
    </location>
</feature>
<feature type="active site" description="Proton donor/acceptor" evidence="1">
    <location>
        <position position="87"/>
    </location>
</feature>
<feature type="binding site" evidence="1">
    <location>
        <begin position="8"/>
        <end position="15"/>
    </location>
    <ligand>
        <name>substrate</name>
    </ligand>
</feature>
<feature type="binding site" evidence="1">
    <location>
        <begin position="21"/>
        <end position="22"/>
    </location>
    <ligand>
        <name>substrate</name>
    </ligand>
</feature>
<feature type="binding site" evidence="1">
    <location>
        <position position="60"/>
    </location>
    <ligand>
        <name>substrate</name>
    </ligand>
</feature>
<feature type="binding site" evidence="1">
    <location>
        <begin position="87"/>
        <end position="90"/>
    </location>
    <ligand>
        <name>substrate</name>
    </ligand>
</feature>
<feature type="binding site" evidence="1">
    <location>
        <position position="98"/>
    </location>
    <ligand>
        <name>substrate</name>
    </ligand>
</feature>
<feature type="binding site" evidence="1">
    <location>
        <begin position="114"/>
        <end position="115"/>
    </location>
    <ligand>
        <name>substrate</name>
    </ligand>
</feature>
<feature type="binding site" evidence="1">
    <location>
        <begin position="183"/>
        <end position="184"/>
    </location>
    <ligand>
        <name>substrate</name>
    </ligand>
</feature>
<feature type="site" description="Transition state stabilizer" evidence="1">
    <location>
        <position position="182"/>
    </location>
</feature>
<sequence>MKRIVLIRHGESLWNKENRFTGWTDVDLSEKGIEEAKKAGELMKKEGFQFTKAYTSYLKRAVKTLNGVLDVMDLDWIPVEKTWRLNEKHYGMLQGLNKAETAEKYGDEQVLIWRRSYDVPPTPMEKEDPRSPFMDPRYKGVCEKDLPLTEALCDTVNRILPYWNETIFPTLKEHDEVLVAAHGNSLRGIIKVLKNISDEDIISLNLPTAVPYVFEFDDNLRLVKDYFLGDPEEIKKLMEAVANQGKKK</sequence>
<comment type="function">
    <text evidence="1">Catalyzes the interconversion of 2-phosphoglycerate and 3-phosphoglycerate.</text>
</comment>
<comment type="catalytic activity">
    <reaction evidence="1">
        <text>(2R)-2-phosphoglycerate = (2R)-3-phosphoglycerate</text>
        <dbReference type="Rhea" id="RHEA:15901"/>
        <dbReference type="ChEBI" id="CHEBI:58272"/>
        <dbReference type="ChEBI" id="CHEBI:58289"/>
        <dbReference type="EC" id="5.4.2.11"/>
    </reaction>
</comment>
<comment type="pathway">
    <text evidence="1">Carbohydrate degradation; glycolysis; pyruvate from D-glyceraldehyde 3-phosphate: step 3/5.</text>
</comment>
<comment type="similarity">
    <text evidence="1">Belongs to the phosphoglycerate mutase family. BPG-dependent PGAM subfamily.</text>
</comment>
<dbReference type="EC" id="5.4.2.11" evidence="1"/>
<dbReference type="EMBL" id="AP009380">
    <property type="protein sequence ID" value="BAG32762.1"/>
    <property type="molecule type" value="Genomic_DNA"/>
</dbReference>
<dbReference type="RefSeq" id="WP_005875265.1">
    <property type="nucleotide sequence ID" value="NZ_CP025930.1"/>
</dbReference>
<dbReference type="SMR" id="B2RHB7"/>
<dbReference type="GeneID" id="57240383"/>
<dbReference type="KEGG" id="pgn:PGN_0243"/>
<dbReference type="eggNOG" id="COG0588">
    <property type="taxonomic scope" value="Bacteria"/>
</dbReference>
<dbReference type="HOGENOM" id="CLU_033323_1_1_10"/>
<dbReference type="OrthoDB" id="9782128at2"/>
<dbReference type="BioCyc" id="PGIN431947:G1G2V-271-MONOMER"/>
<dbReference type="UniPathway" id="UPA00109">
    <property type="reaction ID" value="UER00186"/>
</dbReference>
<dbReference type="Proteomes" id="UP000008842">
    <property type="component" value="Chromosome"/>
</dbReference>
<dbReference type="GO" id="GO:0004619">
    <property type="term" value="F:phosphoglycerate mutase activity"/>
    <property type="evidence" value="ECO:0007669"/>
    <property type="project" value="UniProtKB-EC"/>
</dbReference>
<dbReference type="GO" id="GO:0006094">
    <property type="term" value="P:gluconeogenesis"/>
    <property type="evidence" value="ECO:0007669"/>
    <property type="project" value="UniProtKB-UniRule"/>
</dbReference>
<dbReference type="GO" id="GO:0006096">
    <property type="term" value="P:glycolytic process"/>
    <property type="evidence" value="ECO:0007669"/>
    <property type="project" value="UniProtKB-UniRule"/>
</dbReference>
<dbReference type="CDD" id="cd07067">
    <property type="entry name" value="HP_PGM_like"/>
    <property type="match status" value="1"/>
</dbReference>
<dbReference type="FunFam" id="3.40.50.1240:FF:000003">
    <property type="entry name" value="2,3-bisphosphoglycerate-dependent phosphoglycerate mutase"/>
    <property type="match status" value="1"/>
</dbReference>
<dbReference type="Gene3D" id="3.40.50.1240">
    <property type="entry name" value="Phosphoglycerate mutase-like"/>
    <property type="match status" value="1"/>
</dbReference>
<dbReference type="HAMAP" id="MF_01039">
    <property type="entry name" value="PGAM_GpmA"/>
    <property type="match status" value="1"/>
</dbReference>
<dbReference type="InterPro" id="IPR013078">
    <property type="entry name" value="His_Pase_superF_clade-1"/>
</dbReference>
<dbReference type="InterPro" id="IPR029033">
    <property type="entry name" value="His_PPase_superfam"/>
</dbReference>
<dbReference type="InterPro" id="IPR001345">
    <property type="entry name" value="PG/BPGM_mutase_AS"/>
</dbReference>
<dbReference type="InterPro" id="IPR005952">
    <property type="entry name" value="Phosphogly_mut1"/>
</dbReference>
<dbReference type="NCBIfam" id="TIGR01258">
    <property type="entry name" value="pgm_1"/>
    <property type="match status" value="1"/>
</dbReference>
<dbReference type="NCBIfam" id="NF010713">
    <property type="entry name" value="PRK14115.1"/>
    <property type="match status" value="1"/>
</dbReference>
<dbReference type="PANTHER" id="PTHR11931">
    <property type="entry name" value="PHOSPHOGLYCERATE MUTASE"/>
    <property type="match status" value="1"/>
</dbReference>
<dbReference type="Pfam" id="PF00300">
    <property type="entry name" value="His_Phos_1"/>
    <property type="match status" value="1"/>
</dbReference>
<dbReference type="PIRSF" id="PIRSF000709">
    <property type="entry name" value="6PFK_2-Ptase"/>
    <property type="match status" value="1"/>
</dbReference>
<dbReference type="SMART" id="SM00855">
    <property type="entry name" value="PGAM"/>
    <property type="match status" value="1"/>
</dbReference>
<dbReference type="SUPFAM" id="SSF53254">
    <property type="entry name" value="Phosphoglycerate mutase-like"/>
    <property type="match status" value="1"/>
</dbReference>
<dbReference type="PROSITE" id="PS00175">
    <property type="entry name" value="PG_MUTASE"/>
    <property type="match status" value="1"/>
</dbReference>